<keyword id="KW-1185">Reference proteome</keyword>
<keyword id="KW-0687">Ribonucleoprotein</keyword>
<keyword id="KW-0689">Ribosomal protein</keyword>
<keyword id="KW-0694">RNA-binding</keyword>
<keyword id="KW-0699">rRNA-binding</keyword>
<comment type="function">
    <text evidence="1">One of the primary rRNA binding proteins, it binds directly to 16S rRNA where it helps nucleate assembly of the platform of the 30S subunit by binding and bridging several RNA helices of the 16S rRNA.</text>
</comment>
<comment type="function">
    <text evidence="1">Forms an intersubunit bridge (bridge B4) with the 23S rRNA of the 50S subunit in the ribosome.</text>
</comment>
<comment type="subunit">
    <text evidence="1">Part of the 30S ribosomal subunit. Forms a bridge to the 50S subunit in the 70S ribosome, contacting the 23S rRNA.</text>
</comment>
<comment type="similarity">
    <text evidence="1">Belongs to the universal ribosomal protein uS15 family.</text>
</comment>
<accession>Q21H64</accession>
<evidence type="ECO:0000255" key="1">
    <source>
        <dbReference type="HAMAP-Rule" id="MF_01343"/>
    </source>
</evidence>
<evidence type="ECO:0000305" key="2"/>
<name>RS15_SACD2</name>
<organism>
    <name type="scientific">Saccharophagus degradans (strain 2-40 / ATCC 43961 / DSM 17024)</name>
    <dbReference type="NCBI Taxonomy" id="203122"/>
    <lineage>
        <taxon>Bacteria</taxon>
        <taxon>Pseudomonadati</taxon>
        <taxon>Pseudomonadota</taxon>
        <taxon>Gammaproteobacteria</taxon>
        <taxon>Cellvibrionales</taxon>
        <taxon>Cellvibrionaceae</taxon>
        <taxon>Saccharophagus</taxon>
    </lineage>
</organism>
<feature type="chain" id="PRO_0000255528" description="Small ribosomal subunit protein uS15">
    <location>
        <begin position="1"/>
        <end position="89"/>
    </location>
</feature>
<proteinExistence type="inferred from homology"/>
<gene>
    <name evidence="1" type="primary">rpsO</name>
    <name type="ordered locus">Sde_2705</name>
</gene>
<dbReference type="EMBL" id="CP000282">
    <property type="protein sequence ID" value="ABD81965.1"/>
    <property type="molecule type" value="Genomic_DNA"/>
</dbReference>
<dbReference type="RefSeq" id="WP_011469182.1">
    <property type="nucleotide sequence ID" value="NC_007912.1"/>
</dbReference>
<dbReference type="SMR" id="Q21H64"/>
<dbReference type="STRING" id="203122.Sde_2705"/>
<dbReference type="GeneID" id="98614362"/>
<dbReference type="KEGG" id="sde:Sde_2705"/>
<dbReference type="eggNOG" id="COG0184">
    <property type="taxonomic scope" value="Bacteria"/>
</dbReference>
<dbReference type="HOGENOM" id="CLU_148518_0_0_6"/>
<dbReference type="OrthoDB" id="9799262at2"/>
<dbReference type="Proteomes" id="UP000001947">
    <property type="component" value="Chromosome"/>
</dbReference>
<dbReference type="GO" id="GO:0022627">
    <property type="term" value="C:cytosolic small ribosomal subunit"/>
    <property type="evidence" value="ECO:0007669"/>
    <property type="project" value="TreeGrafter"/>
</dbReference>
<dbReference type="GO" id="GO:0019843">
    <property type="term" value="F:rRNA binding"/>
    <property type="evidence" value="ECO:0007669"/>
    <property type="project" value="UniProtKB-UniRule"/>
</dbReference>
<dbReference type="GO" id="GO:0003735">
    <property type="term" value="F:structural constituent of ribosome"/>
    <property type="evidence" value="ECO:0007669"/>
    <property type="project" value="InterPro"/>
</dbReference>
<dbReference type="GO" id="GO:0006412">
    <property type="term" value="P:translation"/>
    <property type="evidence" value="ECO:0007669"/>
    <property type="project" value="UniProtKB-UniRule"/>
</dbReference>
<dbReference type="CDD" id="cd00353">
    <property type="entry name" value="Ribosomal_S15p_S13e"/>
    <property type="match status" value="1"/>
</dbReference>
<dbReference type="FunFam" id="1.10.287.10:FF:000002">
    <property type="entry name" value="30S ribosomal protein S15"/>
    <property type="match status" value="1"/>
</dbReference>
<dbReference type="Gene3D" id="6.10.250.3130">
    <property type="match status" value="1"/>
</dbReference>
<dbReference type="Gene3D" id="1.10.287.10">
    <property type="entry name" value="S15/NS1, RNA-binding"/>
    <property type="match status" value="1"/>
</dbReference>
<dbReference type="HAMAP" id="MF_01343_B">
    <property type="entry name" value="Ribosomal_uS15_B"/>
    <property type="match status" value="1"/>
</dbReference>
<dbReference type="InterPro" id="IPR000589">
    <property type="entry name" value="Ribosomal_uS15"/>
</dbReference>
<dbReference type="InterPro" id="IPR005290">
    <property type="entry name" value="Ribosomal_uS15_bac-type"/>
</dbReference>
<dbReference type="InterPro" id="IPR009068">
    <property type="entry name" value="uS15_NS1_RNA-bd_sf"/>
</dbReference>
<dbReference type="NCBIfam" id="TIGR00952">
    <property type="entry name" value="S15_bact"/>
    <property type="match status" value="1"/>
</dbReference>
<dbReference type="PANTHER" id="PTHR23321">
    <property type="entry name" value="RIBOSOMAL PROTEIN S15, BACTERIAL AND ORGANELLAR"/>
    <property type="match status" value="1"/>
</dbReference>
<dbReference type="PANTHER" id="PTHR23321:SF26">
    <property type="entry name" value="SMALL RIBOSOMAL SUBUNIT PROTEIN US15M"/>
    <property type="match status" value="1"/>
</dbReference>
<dbReference type="Pfam" id="PF00312">
    <property type="entry name" value="Ribosomal_S15"/>
    <property type="match status" value="1"/>
</dbReference>
<dbReference type="SMART" id="SM01387">
    <property type="entry name" value="Ribosomal_S15"/>
    <property type="match status" value="1"/>
</dbReference>
<dbReference type="SUPFAM" id="SSF47060">
    <property type="entry name" value="S15/NS1 RNA-binding domain"/>
    <property type="match status" value="1"/>
</dbReference>
<dbReference type="PROSITE" id="PS00362">
    <property type="entry name" value="RIBOSOMAL_S15"/>
    <property type="match status" value="1"/>
</dbReference>
<protein>
    <recommendedName>
        <fullName evidence="1">Small ribosomal subunit protein uS15</fullName>
    </recommendedName>
    <alternativeName>
        <fullName evidence="2">30S ribosomal protein S15</fullName>
    </alternativeName>
</protein>
<sequence length="89" mass="10171">MALSAAEKSAIVKEYQTAETDTGSPEVQVALLTANINKLQGHFSDHKQDHHSRRGLIRMVNQRRKLLDYLKGKNVERYASLIQRLGLRR</sequence>
<reference key="1">
    <citation type="journal article" date="2008" name="PLoS Genet.">
        <title>Complete genome sequence of the complex carbohydrate-degrading marine bacterium, Saccharophagus degradans strain 2-40 T.</title>
        <authorList>
            <person name="Weiner R.M."/>
            <person name="Taylor L.E. II"/>
            <person name="Henrissat B."/>
            <person name="Hauser L."/>
            <person name="Land M."/>
            <person name="Coutinho P.M."/>
            <person name="Rancurel C."/>
            <person name="Saunders E.H."/>
            <person name="Longmire A.G."/>
            <person name="Zhang H."/>
            <person name="Bayer E.A."/>
            <person name="Gilbert H.J."/>
            <person name="Larimer F."/>
            <person name="Zhulin I.B."/>
            <person name="Ekborg N.A."/>
            <person name="Lamed R."/>
            <person name="Richardson P.M."/>
            <person name="Borovok I."/>
            <person name="Hutcheson S."/>
        </authorList>
    </citation>
    <scope>NUCLEOTIDE SEQUENCE [LARGE SCALE GENOMIC DNA]</scope>
    <source>
        <strain>2-40 / ATCC 43961 / DSM 17024</strain>
    </source>
</reference>